<evidence type="ECO:0000250" key="1"/>
<evidence type="ECO:0000255" key="2"/>
<evidence type="ECO:0000269" key="3">
    <source>
    </source>
</evidence>
<evidence type="ECO:0000305" key="4"/>
<keyword id="KW-1015">Disulfide bond</keyword>
<keyword id="KW-0325">Glycoprotein</keyword>
<keyword id="KW-1185">Reference proteome</keyword>
<keyword id="KW-0964">Secreted</keyword>
<keyword id="KW-0732">Signal</keyword>
<keyword id="KW-0813">Transport</keyword>
<protein>
    <recommendedName>
        <fullName>Epididymal-specific lipocalin-9</fullName>
    </recommendedName>
    <alternativeName>
        <fullName>MUP-like lipocalin</fullName>
    </alternativeName>
</protein>
<proteinExistence type="evidence at transcript level"/>
<sequence length="178" mass="20503">MVLLLVLGLVLSLATAQFNLHTAVRRDYNLARISGTWYLDSIASDNMTRIEENGDLRLFIRNIKLLNNGSLQFDFHFMLQGECVAVTMVCEKTKNNGEFSVAYEGKNKVLLLETDYSMYIIFYMQNIKNGTKTQVLALYGRSILLDKTHQREFENICNLYGLDSQNIIDMTKKDFCFL</sequence>
<dbReference type="EMBL" id="AF435738">
    <property type="protein sequence ID" value="AAO50215.1"/>
    <property type="molecule type" value="mRNA"/>
</dbReference>
<dbReference type="EMBL" id="AK020305">
    <property type="protein sequence ID" value="BAB32064.1"/>
    <property type="molecule type" value="mRNA"/>
</dbReference>
<dbReference type="CCDS" id="CCDS15792.1"/>
<dbReference type="RefSeq" id="NP_084235.1">
    <property type="nucleotide sequence ID" value="NM_029959.2"/>
</dbReference>
<dbReference type="SMR" id="Q9D267"/>
<dbReference type="FunCoup" id="Q9D267">
    <property type="interactions" value="324"/>
</dbReference>
<dbReference type="STRING" id="10090.ENSMUSP00000023978"/>
<dbReference type="GlyCosmos" id="Q9D267">
    <property type="glycosylation" value="3 sites, No reported glycans"/>
</dbReference>
<dbReference type="GlyGen" id="Q9D267">
    <property type="glycosylation" value="3 sites"/>
</dbReference>
<dbReference type="PhosphoSitePlus" id="Q9D267"/>
<dbReference type="PaxDb" id="10090-ENSMUSP00000023978"/>
<dbReference type="ProteomicsDB" id="292245"/>
<dbReference type="Antibodypedia" id="56511">
    <property type="antibodies" value="73 antibodies from 17 providers"/>
</dbReference>
<dbReference type="DNASU" id="77704"/>
<dbReference type="Ensembl" id="ENSMUST00000023978.3">
    <property type="protein sequence ID" value="ENSMUSP00000023978.3"/>
    <property type="gene ID" value="ENSMUSG00000023210.3"/>
</dbReference>
<dbReference type="GeneID" id="77704"/>
<dbReference type="KEGG" id="mmu:77704"/>
<dbReference type="UCSC" id="uc008itm.1">
    <property type="organism name" value="mouse"/>
</dbReference>
<dbReference type="AGR" id="MGI:1924954"/>
<dbReference type="CTD" id="392399"/>
<dbReference type="MGI" id="MGI:1924954">
    <property type="gene designation" value="Lcn9"/>
</dbReference>
<dbReference type="VEuPathDB" id="HostDB:ENSMUSG00000023210"/>
<dbReference type="eggNOG" id="ENOG502RTZI">
    <property type="taxonomic scope" value="Eukaryota"/>
</dbReference>
<dbReference type="GeneTree" id="ENSGT01050000244868"/>
<dbReference type="HOGENOM" id="CLU_094061_4_0_1"/>
<dbReference type="InParanoid" id="Q9D267"/>
<dbReference type="OMA" id="NYDMAKV"/>
<dbReference type="OrthoDB" id="9048943at2759"/>
<dbReference type="PhylomeDB" id="Q9D267"/>
<dbReference type="TreeFam" id="TF338197"/>
<dbReference type="Reactome" id="R-MMU-804914">
    <property type="pathway name" value="Transport of fatty acids"/>
</dbReference>
<dbReference type="BioGRID-ORCS" id="77704">
    <property type="hits" value="2 hits in 77 CRISPR screens"/>
</dbReference>
<dbReference type="PRO" id="PR:Q9D267"/>
<dbReference type="Proteomes" id="UP000000589">
    <property type="component" value="Chromosome 2"/>
</dbReference>
<dbReference type="RNAct" id="Q9D267">
    <property type="molecule type" value="protein"/>
</dbReference>
<dbReference type="Bgee" id="ENSMUSG00000023210">
    <property type="expression patterns" value="Expressed in blastoderm cell in morula and 11 other cell types or tissues"/>
</dbReference>
<dbReference type="GO" id="GO:0005576">
    <property type="term" value="C:extracellular region"/>
    <property type="evidence" value="ECO:0007669"/>
    <property type="project" value="UniProtKB-SubCell"/>
</dbReference>
<dbReference type="GO" id="GO:0036094">
    <property type="term" value="F:small molecule binding"/>
    <property type="evidence" value="ECO:0007669"/>
    <property type="project" value="InterPro"/>
</dbReference>
<dbReference type="CDD" id="cd19429">
    <property type="entry name" value="lipocalin_9"/>
    <property type="match status" value="1"/>
</dbReference>
<dbReference type="Gene3D" id="2.40.128.20">
    <property type="match status" value="1"/>
</dbReference>
<dbReference type="InterPro" id="IPR012674">
    <property type="entry name" value="Calycin"/>
</dbReference>
<dbReference type="InterPro" id="IPR002345">
    <property type="entry name" value="Lipocalin"/>
</dbReference>
<dbReference type="InterPro" id="IPR000566">
    <property type="entry name" value="Lipocln_cytosolic_FA-bd_dom"/>
</dbReference>
<dbReference type="InterPro" id="IPR002971">
    <property type="entry name" value="Maj_urinary"/>
</dbReference>
<dbReference type="PANTHER" id="PTHR11430:SF28">
    <property type="entry name" value="EPIDIDYMAL-SPECIFIC LIPOCALIN-9"/>
    <property type="match status" value="1"/>
</dbReference>
<dbReference type="PANTHER" id="PTHR11430">
    <property type="entry name" value="LIPOCALIN"/>
    <property type="match status" value="1"/>
</dbReference>
<dbReference type="Pfam" id="PF00061">
    <property type="entry name" value="Lipocalin"/>
    <property type="match status" value="1"/>
</dbReference>
<dbReference type="PRINTS" id="PR01221">
    <property type="entry name" value="MAJORURINARY"/>
</dbReference>
<dbReference type="SUPFAM" id="SSF50814">
    <property type="entry name" value="Lipocalins"/>
    <property type="match status" value="1"/>
</dbReference>
<feature type="signal peptide" evidence="2">
    <location>
        <begin position="1"/>
        <end position="16"/>
    </location>
</feature>
<feature type="chain" id="PRO_0000017919" description="Epididymal-specific lipocalin-9">
    <location>
        <begin position="17"/>
        <end position="178"/>
    </location>
</feature>
<feature type="glycosylation site" description="N-linked (GlcNAc...) asparagine" evidence="2">
    <location>
        <position position="46"/>
    </location>
</feature>
<feature type="glycosylation site" description="N-linked (GlcNAc...) asparagine" evidence="2">
    <location>
        <position position="68"/>
    </location>
</feature>
<feature type="glycosylation site" description="N-linked (GlcNAc...) asparagine" evidence="2">
    <location>
        <position position="129"/>
    </location>
</feature>
<feature type="disulfide bond" evidence="1">
    <location>
        <begin position="83"/>
        <end position="176"/>
    </location>
</feature>
<feature type="sequence conflict" description="In Ref. 1; AAO50215." evidence="4" ref="1">
    <original>N</original>
    <variation>I</variation>
    <location>
        <position position="68"/>
    </location>
</feature>
<name>LCN9_MOUSE</name>
<gene>
    <name type="primary">Lcn9</name>
</gene>
<accession>Q9D267</accession>
<accession>Q80ZC4</accession>
<organism>
    <name type="scientific">Mus musculus</name>
    <name type="common">Mouse</name>
    <dbReference type="NCBI Taxonomy" id="10090"/>
    <lineage>
        <taxon>Eukaryota</taxon>
        <taxon>Metazoa</taxon>
        <taxon>Chordata</taxon>
        <taxon>Craniata</taxon>
        <taxon>Vertebrata</taxon>
        <taxon>Euteleostomi</taxon>
        <taxon>Mammalia</taxon>
        <taxon>Eutheria</taxon>
        <taxon>Euarchontoglires</taxon>
        <taxon>Glires</taxon>
        <taxon>Rodentia</taxon>
        <taxon>Myomorpha</taxon>
        <taxon>Muroidea</taxon>
        <taxon>Muridae</taxon>
        <taxon>Murinae</taxon>
        <taxon>Mus</taxon>
        <taxon>Mus</taxon>
    </lineage>
</organism>
<comment type="subcellular location">
    <subcellularLocation>
        <location>Secreted</location>
    </subcellularLocation>
</comment>
<comment type="tissue specificity">
    <text evidence="3">Expressed in epididymis. Not detected in all other tissues tested.</text>
</comment>
<comment type="developmental stage">
    <text evidence="3">First detected after 3 weeks postnatal development.</text>
</comment>
<comment type="similarity">
    <text evidence="4">Belongs to the calycin superfamily. Lipocalin family.</text>
</comment>
<reference key="1">
    <citation type="journal article" date="2004" name="Gene">
        <title>Molecular evolution of epididymal lipocalin genes localized on mouse chromosome 2.</title>
        <authorList>
            <person name="Suzuki K."/>
            <person name="Lareyre J.-J."/>
            <person name="Sanchez D."/>
            <person name="Gutierrez G."/>
            <person name="Araki Y."/>
            <person name="Matusik R.J."/>
            <person name="Orgebin-Crist M.-C."/>
        </authorList>
    </citation>
    <scope>NUCLEOTIDE SEQUENCE [MRNA]</scope>
    <scope>TISSUE SPECIFICITY</scope>
    <scope>DEVELOPMENTAL STAGE</scope>
    <source>
        <strain>C57BL/6 X DBA/2</strain>
        <tissue>Epididymis</tissue>
    </source>
</reference>
<reference key="2">
    <citation type="journal article" date="2005" name="Science">
        <title>The transcriptional landscape of the mammalian genome.</title>
        <authorList>
            <person name="Carninci P."/>
            <person name="Kasukawa T."/>
            <person name="Katayama S."/>
            <person name="Gough J."/>
            <person name="Frith M.C."/>
            <person name="Maeda N."/>
            <person name="Oyama R."/>
            <person name="Ravasi T."/>
            <person name="Lenhard B."/>
            <person name="Wells C."/>
            <person name="Kodzius R."/>
            <person name="Shimokawa K."/>
            <person name="Bajic V.B."/>
            <person name="Brenner S.E."/>
            <person name="Batalov S."/>
            <person name="Forrest A.R."/>
            <person name="Zavolan M."/>
            <person name="Davis M.J."/>
            <person name="Wilming L.G."/>
            <person name="Aidinis V."/>
            <person name="Allen J.E."/>
            <person name="Ambesi-Impiombato A."/>
            <person name="Apweiler R."/>
            <person name="Aturaliya R.N."/>
            <person name="Bailey T.L."/>
            <person name="Bansal M."/>
            <person name="Baxter L."/>
            <person name="Beisel K.W."/>
            <person name="Bersano T."/>
            <person name="Bono H."/>
            <person name="Chalk A.M."/>
            <person name="Chiu K.P."/>
            <person name="Choudhary V."/>
            <person name="Christoffels A."/>
            <person name="Clutterbuck D.R."/>
            <person name="Crowe M.L."/>
            <person name="Dalla E."/>
            <person name="Dalrymple B.P."/>
            <person name="de Bono B."/>
            <person name="Della Gatta G."/>
            <person name="di Bernardo D."/>
            <person name="Down T."/>
            <person name="Engstrom P."/>
            <person name="Fagiolini M."/>
            <person name="Faulkner G."/>
            <person name="Fletcher C.F."/>
            <person name="Fukushima T."/>
            <person name="Furuno M."/>
            <person name="Futaki S."/>
            <person name="Gariboldi M."/>
            <person name="Georgii-Hemming P."/>
            <person name="Gingeras T.R."/>
            <person name="Gojobori T."/>
            <person name="Green R.E."/>
            <person name="Gustincich S."/>
            <person name="Harbers M."/>
            <person name="Hayashi Y."/>
            <person name="Hensch T.K."/>
            <person name="Hirokawa N."/>
            <person name="Hill D."/>
            <person name="Huminiecki L."/>
            <person name="Iacono M."/>
            <person name="Ikeo K."/>
            <person name="Iwama A."/>
            <person name="Ishikawa T."/>
            <person name="Jakt M."/>
            <person name="Kanapin A."/>
            <person name="Katoh M."/>
            <person name="Kawasawa Y."/>
            <person name="Kelso J."/>
            <person name="Kitamura H."/>
            <person name="Kitano H."/>
            <person name="Kollias G."/>
            <person name="Krishnan S.P."/>
            <person name="Kruger A."/>
            <person name="Kummerfeld S.K."/>
            <person name="Kurochkin I.V."/>
            <person name="Lareau L.F."/>
            <person name="Lazarevic D."/>
            <person name="Lipovich L."/>
            <person name="Liu J."/>
            <person name="Liuni S."/>
            <person name="McWilliam S."/>
            <person name="Madan Babu M."/>
            <person name="Madera M."/>
            <person name="Marchionni L."/>
            <person name="Matsuda H."/>
            <person name="Matsuzawa S."/>
            <person name="Miki H."/>
            <person name="Mignone F."/>
            <person name="Miyake S."/>
            <person name="Morris K."/>
            <person name="Mottagui-Tabar S."/>
            <person name="Mulder N."/>
            <person name="Nakano N."/>
            <person name="Nakauchi H."/>
            <person name="Ng P."/>
            <person name="Nilsson R."/>
            <person name="Nishiguchi S."/>
            <person name="Nishikawa S."/>
            <person name="Nori F."/>
            <person name="Ohara O."/>
            <person name="Okazaki Y."/>
            <person name="Orlando V."/>
            <person name="Pang K.C."/>
            <person name="Pavan W.J."/>
            <person name="Pavesi G."/>
            <person name="Pesole G."/>
            <person name="Petrovsky N."/>
            <person name="Piazza S."/>
            <person name="Reed J."/>
            <person name="Reid J.F."/>
            <person name="Ring B.Z."/>
            <person name="Ringwald M."/>
            <person name="Rost B."/>
            <person name="Ruan Y."/>
            <person name="Salzberg S.L."/>
            <person name="Sandelin A."/>
            <person name="Schneider C."/>
            <person name="Schoenbach C."/>
            <person name="Sekiguchi K."/>
            <person name="Semple C.A."/>
            <person name="Seno S."/>
            <person name="Sessa L."/>
            <person name="Sheng Y."/>
            <person name="Shibata Y."/>
            <person name="Shimada H."/>
            <person name="Shimada K."/>
            <person name="Silva D."/>
            <person name="Sinclair B."/>
            <person name="Sperling S."/>
            <person name="Stupka E."/>
            <person name="Sugiura K."/>
            <person name="Sultana R."/>
            <person name="Takenaka Y."/>
            <person name="Taki K."/>
            <person name="Tammoja K."/>
            <person name="Tan S.L."/>
            <person name="Tang S."/>
            <person name="Taylor M.S."/>
            <person name="Tegner J."/>
            <person name="Teichmann S.A."/>
            <person name="Ueda H.R."/>
            <person name="van Nimwegen E."/>
            <person name="Verardo R."/>
            <person name="Wei C.L."/>
            <person name="Yagi K."/>
            <person name="Yamanishi H."/>
            <person name="Zabarovsky E."/>
            <person name="Zhu S."/>
            <person name="Zimmer A."/>
            <person name="Hide W."/>
            <person name="Bult C."/>
            <person name="Grimmond S.M."/>
            <person name="Teasdale R.D."/>
            <person name="Liu E.T."/>
            <person name="Brusic V."/>
            <person name="Quackenbush J."/>
            <person name="Wahlestedt C."/>
            <person name="Mattick J.S."/>
            <person name="Hume D.A."/>
            <person name="Kai C."/>
            <person name="Sasaki D."/>
            <person name="Tomaru Y."/>
            <person name="Fukuda S."/>
            <person name="Kanamori-Katayama M."/>
            <person name="Suzuki M."/>
            <person name="Aoki J."/>
            <person name="Arakawa T."/>
            <person name="Iida J."/>
            <person name="Imamura K."/>
            <person name="Itoh M."/>
            <person name="Kato T."/>
            <person name="Kawaji H."/>
            <person name="Kawagashira N."/>
            <person name="Kawashima T."/>
            <person name="Kojima M."/>
            <person name="Kondo S."/>
            <person name="Konno H."/>
            <person name="Nakano K."/>
            <person name="Ninomiya N."/>
            <person name="Nishio T."/>
            <person name="Okada M."/>
            <person name="Plessy C."/>
            <person name="Shibata K."/>
            <person name="Shiraki T."/>
            <person name="Suzuki S."/>
            <person name="Tagami M."/>
            <person name="Waki K."/>
            <person name="Watahiki A."/>
            <person name="Okamura-Oho Y."/>
            <person name="Suzuki H."/>
            <person name="Kawai J."/>
            <person name="Hayashizaki Y."/>
        </authorList>
    </citation>
    <scope>NUCLEOTIDE SEQUENCE [LARGE SCALE MRNA]</scope>
    <source>
        <strain>C57BL/6J</strain>
        <tissue>Epididymis</tissue>
    </source>
</reference>